<name>GOS12_ARATH</name>
<comment type="function">
    <text evidence="1">Involved in transport from the ER to the Golgi apparatus as well as in intra-Golgi transport. It belongs to a super-family of proteins called t-SNAREs or soluble NSF (N-ethylmaleimide-sensitive factor) attachment protein receptor (By similarity).</text>
</comment>
<comment type="subunit">
    <text evidence="1">Component of several multiprotein Golgi SNARE complexes.</text>
</comment>
<comment type="subcellular location">
    <subcellularLocation>
        <location evidence="1">Golgi apparatus membrane</location>
        <topology evidence="1">Single-pass type IV membrane protein</topology>
    </subcellularLocation>
    <subcellularLocation>
        <location evidence="1">Endoplasmic reticulum membrane</location>
        <topology evidence="1">Single-pass type IV membrane protein</topology>
    </subcellularLocation>
</comment>
<comment type="alternative products">
    <event type="alternative splicing"/>
    <isoform>
        <id>O22151-2</id>
        <name>1</name>
        <sequence type="displayed"/>
    </isoform>
    <isoform>
        <id>O22151-1</id>
        <name>2</name>
        <sequence type="described" ref="VSP_042317"/>
    </isoform>
    <text>A number of isoforms are produced. According to EST sequences.</text>
</comment>
<comment type="similarity">
    <text evidence="5">Belongs to the GOSR1 family.</text>
</comment>
<organism>
    <name type="scientific">Arabidopsis thaliana</name>
    <name type="common">Mouse-ear cress</name>
    <dbReference type="NCBI Taxonomy" id="3702"/>
    <lineage>
        <taxon>Eukaryota</taxon>
        <taxon>Viridiplantae</taxon>
        <taxon>Streptophyta</taxon>
        <taxon>Embryophyta</taxon>
        <taxon>Tracheophyta</taxon>
        <taxon>Spermatophyta</taxon>
        <taxon>Magnoliopsida</taxon>
        <taxon>eudicotyledons</taxon>
        <taxon>Gunneridae</taxon>
        <taxon>Pentapetalae</taxon>
        <taxon>rosids</taxon>
        <taxon>malvids</taxon>
        <taxon>Brassicales</taxon>
        <taxon>Brassicaceae</taxon>
        <taxon>Camelineae</taxon>
        <taxon>Arabidopsis</taxon>
    </lineage>
</organism>
<sequence>MTESSLDLQESGWEELRREARKIEGDLDVKLSSYAKLGARFTQGDTDLVMNYEKVLKCVLVSGYVDTGSPTVGSGRSWKSMEMEIQSLLEKLLDINDSMSRCAASAAPTTSVTQKLARHRDILHEYTQEFRRIKGNINSLREHAELLSSVRDDISEYKASGSMSPGVQVLRERASIHGSISHIDDVIGQAQATRAVLGSQRSLFSDVQGKVKNLGDKFPVIRGLLGSIKRKRSRDTLILSAVIAACTLFLIIYWLSK</sequence>
<proteinExistence type="evidence at protein level"/>
<gene>
    <name type="primary">GOS12</name>
    <name type="ordered locus">At2g45200</name>
    <name type="ORF">F4L23.29</name>
</gene>
<protein>
    <recommendedName>
        <fullName>Golgi SNAP receptor complex member 1-2</fullName>
    </recommendedName>
    <alternativeName>
        <fullName>Golgi SNARE 12 protein</fullName>
        <shortName>AtGOS12</shortName>
    </alternativeName>
</protein>
<reference key="1">
    <citation type="submission" date="2001-03" db="EMBL/GenBank/DDBJ databases">
        <title>Arabidopsis Golgi SNAREs.</title>
        <authorList>
            <person name="Sanderfoot A.A."/>
            <person name="Raikhel N.V."/>
        </authorList>
    </citation>
    <scope>NUCLEOTIDE SEQUENCE [MRNA] (ISOFORM 2)</scope>
</reference>
<reference key="2">
    <citation type="journal article" date="1999" name="Nature">
        <title>Sequence and analysis of chromosome 2 of the plant Arabidopsis thaliana.</title>
        <authorList>
            <person name="Lin X."/>
            <person name="Kaul S."/>
            <person name="Rounsley S.D."/>
            <person name="Shea T.P."/>
            <person name="Benito M.-I."/>
            <person name="Town C.D."/>
            <person name="Fujii C.Y."/>
            <person name="Mason T.M."/>
            <person name="Bowman C.L."/>
            <person name="Barnstead M.E."/>
            <person name="Feldblyum T.V."/>
            <person name="Buell C.R."/>
            <person name="Ketchum K.A."/>
            <person name="Lee J.J."/>
            <person name="Ronning C.M."/>
            <person name="Koo H.L."/>
            <person name="Moffat K.S."/>
            <person name="Cronin L.A."/>
            <person name="Shen M."/>
            <person name="Pai G."/>
            <person name="Van Aken S."/>
            <person name="Umayam L."/>
            <person name="Tallon L.J."/>
            <person name="Gill J.E."/>
            <person name="Adams M.D."/>
            <person name="Carrera A.J."/>
            <person name="Creasy T.H."/>
            <person name="Goodman H.M."/>
            <person name="Somerville C.R."/>
            <person name="Copenhaver G.P."/>
            <person name="Preuss D."/>
            <person name="Nierman W.C."/>
            <person name="White O."/>
            <person name="Eisen J.A."/>
            <person name="Salzberg S.L."/>
            <person name="Fraser C.M."/>
            <person name="Venter J.C."/>
        </authorList>
    </citation>
    <scope>NUCLEOTIDE SEQUENCE [LARGE SCALE GENOMIC DNA]</scope>
    <source>
        <strain>cv. Columbia</strain>
    </source>
</reference>
<reference key="3">
    <citation type="journal article" date="2017" name="Plant J.">
        <title>Araport11: a complete reannotation of the Arabidopsis thaliana reference genome.</title>
        <authorList>
            <person name="Cheng C.Y."/>
            <person name="Krishnakumar V."/>
            <person name="Chan A.P."/>
            <person name="Thibaud-Nissen F."/>
            <person name="Schobel S."/>
            <person name="Town C.D."/>
        </authorList>
    </citation>
    <scope>GENOME REANNOTATION</scope>
    <source>
        <strain>cv. Columbia</strain>
    </source>
</reference>
<reference key="4">
    <citation type="submission" date="2006-02" db="EMBL/GenBank/DDBJ databases">
        <title>Arabidopsis ORF clones.</title>
        <authorList>
            <person name="Shinn P."/>
            <person name="Chen H."/>
            <person name="Kim C.J."/>
            <person name="Ecker J.R."/>
        </authorList>
    </citation>
    <scope>NUCLEOTIDE SEQUENCE [LARGE SCALE MRNA] (ISOFORM 2)</scope>
    <source>
        <strain>cv. Columbia</strain>
    </source>
</reference>
<reference key="5">
    <citation type="journal article" date="2008" name="J. Proteome Res.">
        <title>Site-specific phosphorylation profiling of Arabidopsis proteins by mass spectrometry and peptide chip analysis.</title>
        <authorList>
            <person name="de la Fuente van Bentem S."/>
            <person name="Anrather D."/>
            <person name="Dohnal I."/>
            <person name="Roitinger E."/>
            <person name="Csaszar E."/>
            <person name="Joore J."/>
            <person name="Buijnink J."/>
            <person name="Carreri A."/>
            <person name="Forzani C."/>
            <person name="Lorkovic Z.J."/>
            <person name="Barta A."/>
            <person name="Lecourieux D."/>
            <person name="Verhounig A."/>
            <person name="Jonak C."/>
            <person name="Hirt H."/>
        </authorList>
    </citation>
    <scope>PHOSPHORYLATION [LARGE SCALE ANALYSIS] AT SER-51 (ISOFORM 2)</scope>
    <scope>IDENTIFICATION BY MASS SPECTROMETRY [LARGE SCALE ANALYSIS]</scope>
    <source>
        <tissue>Root</tissue>
    </source>
</reference>
<reference key="6">
    <citation type="journal article" date="2009" name="J. Proteomics">
        <title>Phosphoproteomic analysis of nuclei-enriched fractions from Arabidopsis thaliana.</title>
        <authorList>
            <person name="Jones A.M.E."/>
            <person name="MacLean D."/>
            <person name="Studholme D.J."/>
            <person name="Serna-Sanz A."/>
            <person name="Andreasson E."/>
            <person name="Rathjen J.P."/>
            <person name="Peck S.C."/>
        </authorList>
    </citation>
    <scope>IDENTIFICATION BY MASS SPECTROMETRY [LARGE SCALE ANALYSIS]</scope>
    <source>
        <strain>cv. Columbia</strain>
    </source>
</reference>
<reference key="7">
    <citation type="journal article" date="2009" name="Plant Physiol.">
        <title>Large-scale Arabidopsis phosphoproteome profiling reveals novel chloroplast kinase substrates and phosphorylation networks.</title>
        <authorList>
            <person name="Reiland S."/>
            <person name="Messerli G."/>
            <person name="Baerenfaller K."/>
            <person name="Gerrits B."/>
            <person name="Endler A."/>
            <person name="Grossmann J."/>
            <person name="Gruissem W."/>
            <person name="Baginsky S."/>
        </authorList>
    </citation>
    <scope>IDENTIFICATION BY MASS SPECTROMETRY [LARGE SCALE ANALYSIS]</scope>
</reference>
<dbReference type="EMBL" id="AF357529">
    <property type="protein sequence ID" value="AAK48905.1"/>
    <property type="molecule type" value="mRNA"/>
</dbReference>
<dbReference type="EMBL" id="AC002387">
    <property type="protein sequence ID" value="AAB82642.1"/>
    <property type="molecule type" value="Genomic_DNA"/>
</dbReference>
<dbReference type="EMBL" id="CP002685">
    <property type="protein sequence ID" value="AEC10524.1"/>
    <property type="molecule type" value="Genomic_DNA"/>
</dbReference>
<dbReference type="EMBL" id="CP002685">
    <property type="protein sequence ID" value="AEC10525.1"/>
    <property type="molecule type" value="Genomic_DNA"/>
</dbReference>
<dbReference type="EMBL" id="BT024623">
    <property type="protein sequence ID" value="ABD43021.1"/>
    <property type="molecule type" value="mRNA"/>
</dbReference>
<dbReference type="PIR" id="F84887">
    <property type="entry name" value="F84887"/>
</dbReference>
<dbReference type="RefSeq" id="NP_001189748.1">
    <molecule id="O22151-2"/>
    <property type="nucleotide sequence ID" value="NM_001202819.1"/>
</dbReference>
<dbReference type="RefSeq" id="NP_182045.1">
    <molecule id="O22151-1"/>
    <property type="nucleotide sequence ID" value="NM_130083.5"/>
</dbReference>
<dbReference type="SMR" id="O22151"/>
<dbReference type="BioGRID" id="4464">
    <property type="interactions" value="8"/>
</dbReference>
<dbReference type="FunCoup" id="O22151">
    <property type="interactions" value="4580"/>
</dbReference>
<dbReference type="IntAct" id="O22151">
    <property type="interactions" value="7"/>
</dbReference>
<dbReference type="STRING" id="3702.O22151"/>
<dbReference type="iPTMnet" id="O22151"/>
<dbReference type="PaxDb" id="3702-AT2G45200.2"/>
<dbReference type="ProteomicsDB" id="248448">
    <molecule id="O22151-2"/>
</dbReference>
<dbReference type="EnsemblPlants" id="AT2G45200.1">
    <molecule id="O22151-1"/>
    <property type="protein sequence ID" value="AT2G45200.1"/>
    <property type="gene ID" value="AT2G45200"/>
</dbReference>
<dbReference type="EnsemblPlants" id="AT2G45200.2">
    <molecule id="O22151-2"/>
    <property type="protein sequence ID" value="AT2G45200.2"/>
    <property type="gene ID" value="AT2G45200"/>
</dbReference>
<dbReference type="GeneID" id="819128"/>
<dbReference type="Gramene" id="AT2G45200.1">
    <molecule id="O22151-1"/>
    <property type="protein sequence ID" value="AT2G45200.1"/>
    <property type="gene ID" value="AT2G45200"/>
</dbReference>
<dbReference type="Gramene" id="AT2G45200.2">
    <molecule id="O22151-2"/>
    <property type="protein sequence ID" value="AT2G45200.2"/>
    <property type="gene ID" value="AT2G45200"/>
</dbReference>
<dbReference type="KEGG" id="ath:AT2G45200"/>
<dbReference type="Araport" id="AT2G45200"/>
<dbReference type="TAIR" id="AT2G45200">
    <property type="gene designation" value="GOS12"/>
</dbReference>
<dbReference type="eggNOG" id="KOG3208">
    <property type="taxonomic scope" value="Eukaryota"/>
</dbReference>
<dbReference type="HOGENOM" id="CLU_078034_2_1_1"/>
<dbReference type="InParanoid" id="O22151"/>
<dbReference type="OMA" id="QAYAVND"/>
<dbReference type="OrthoDB" id="422156at2759"/>
<dbReference type="CD-CODE" id="4299E36E">
    <property type="entry name" value="Nucleolus"/>
</dbReference>
<dbReference type="PRO" id="PR:O22151"/>
<dbReference type="Proteomes" id="UP000006548">
    <property type="component" value="Chromosome 2"/>
</dbReference>
<dbReference type="ExpressionAtlas" id="O22151">
    <property type="expression patterns" value="baseline and differential"/>
</dbReference>
<dbReference type="GO" id="GO:0005801">
    <property type="term" value="C:cis-Golgi network"/>
    <property type="evidence" value="ECO:0007669"/>
    <property type="project" value="InterPro"/>
</dbReference>
<dbReference type="GO" id="GO:0005789">
    <property type="term" value="C:endoplasmic reticulum membrane"/>
    <property type="evidence" value="ECO:0007669"/>
    <property type="project" value="UniProtKB-SubCell"/>
</dbReference>
<dbReference type="GO" id="GO:0005768">
    <property type="term" value="C:endosome"/>
    <property type="evidence" value="ECO:0007005"/>
    <property type="project" value="TAIR"/>
</dbReference>
<dbReference type="GO" id="GO:0005794">
    <property type="term" value="C:Golgi apparatus"/>
    <property type="evidence" value="ECO:0007005"/>
    <property type="project" value="TAIR"/>
</dbReference>
<dbReference type="GO" id="GO:0000139">
    <property type="term" value="C:Golgi membrane"/>
    <property type="evidence" value="ECO:0007669"/>
    <property type="project" value="UniProtKB-SubCell"/>
</dbReference>
<dbReference type="GO" id="GO:0000325">
    <property type="term" value="C:plant-type vacuole"/>
    <property type="evidence" value="ECO:0007005"/>
    <property type="project" value="TAIR"/>
</dbReference>
<dbReference type="GO" id="GO:0005802">
    <property type="term" value="C:trans-Golgi network"/>
    <property type="evidence" value="ECO:0007005"/>
    <property type="project" value="TAIR"/>
</dbReference>
<dbReference type="GO" id="GO:0006888">
    <property type="term" value="P:endoplasmic reticulum to Golgi vesicle-mediated transport"/>
    <property type="evidence" value="ECO:0007669"/>
    <property type="project" value="InterPro"/>
</dbReference>
<dbReference type="GO" id="GO:0015031">
    <property type="term" value="P:protein transport"/>
    <property type="evidence" value="ECO:0007669"/>
    <property type="project" value="UniProtKB-KW"/>
</dbReference>
<dbReference type="InterPro" id="IPR023601">
    <property type="entry name" value="Golgi_SNAP_su1"/>
</dbReference>
<dbReference type="PANTHER" id="PTHR21094:SF2">
    <property type="entry name" value="GOLGI SNAP RECEPTOR COMPLEX MEMBER 1"/>
    <property type="match status" value="1"/>
</dbReference>
<dbReference type="PANTHER" id="PTHR21094">
    <property type="entry name" value="GOS-28 SNARE- RELATED"/>
    <property type="match status" value="1"/>
</dbReference>
<dbReference type="Pfam" id="PF12352">
    <property type="entry name" value="V-SNARE_C"/>
    <property type="match status" value="1"/>
</dbReference>
<dbReference type="PIRSF" id="PIRSF027109">
    <property type="entry name" value="Golgi_SNARE"/>
    <property type="match status" value="1"/>
</dbReference>
<accession>O22151</accession>
<accession>F4IW37</accession>
<accession>Q2HIF8</accession>
<keyword id="KW-0025">Alternative splicing</keyword>
<keyword id="KW-0175">Coiled coil</keyword>
<keyword id="KW-0256">Endoplasmic reticulum</keyword>
<keyword id="KW-0931">ER-Golgi transport</keyword>
<keyword id="KW-0333">Golgi apparatus</keyword>
<keyword id="KW-0472">Membrane</keyword>
<keyword id="KW-0597">Phosphoprotein</keyword>
<keyword id="KW-0653">Protein transport</keyword>
<keyword id="KW-1185">Reference proteome</keyword>
<keyword id="KW-0812">Transmembrane</keyword>
<keyword id="KW-1133">Transmembrane helix</keyword>
<keyword id="KW-0813">Transport</keyword>
<evidence type="ECO:0000250" key="1"/>
<evidence type="ECO:0000255" key="2"/>
<evidence type="ECO:0000303" key="3">
    <source ref="1"/>
</evidence>
<evidence type="ECO:0000303" key="4">
    <source ref="4"/>
</evidence>
<evidence type="ECO:0000305" key="5"/>
<evidence type="ECO:0007744" key="6">
    <source>
    </source>
</evidence>
<feature type="chain" id="PRO_0000212548" description="Golgi SNAP receptor complex member 1-2">
    <location>
        <begin position="1"/>
        <end position="257"/>
    </location>
</feature>
<feature type="topological domain" description="Cytoplasmic" evidence="2">
    <location>
        <begin position="1"/>
        <end position="235"/>
    </location>
</feature>
<feature type="transmembrane region" description="Helical; Anchor for type IV membrane protein" evidence="2">
    <location>
        <begin position="236"/>
        <end position="256"/>
    </location>
</feature>
<feature type="topological domain" description="Vesicular" evidence="2">
    <location>
        <position position="257"/>
    </location>
</feature>
<feature type="coiled-coil region" evidence="2">
    <location>
        <begin position="113"/>
        <end position="147"/>
    </location>
</feature>
<feature type="splice variant" id="VSP_042317" description="In isoform 2." evidence="3 4">
    <location>
        <begin position="45"/>
        <end position="62"/>
    </location>
</feature>
<feature type="modified residue" description="Phosphoserine" evidence="6">
    <location sequence="O22151-1">
        <position position="51"/>
    </location>
</feature>